<protein>
    <recommendedName>
        <fullName>Protein BFR2</fullName>
    </recommendedName>
</protein>
<sequence>MPPKTSSLASLLGTLTNAAPVDFDPEAPDADQPTFTTFANGSDDAASESGSDGDEDEDGDDDDDKEEEEELMNPRAHYADVATSDMRKRAALSESDKINDPRYHGVKSSRAELYADDYNGEHASDDDQDDQDDQEDEYGSDGDQDEDADQDDEDMEVASSKKDKKLRFAADNDESDDDSDSSQVNQTSAQASTSNSIAAQIAQSASQAKALKARRLEDAEKGRQVRKQIKTYERTLETRIKAQSVLRDINRLPDPQVYQQAMTSSSTCIEPAIVLLEQLLELSDTLFSLRTRLNTLSNSEEEEDGMVTAPSTRKRKRDFDVTVPEHQEEVEQTWTQIASHDQIDAVLNDVVGYSCALEPHRRRVLDKWSLKVTSAAAAAAAASNGNRFTQLRAVNQAPSSQIDSALAGDGLSRLVARTRVLRSESEGSFKLGSTSTSLDTEEKQDSEVFDDTDFYSTLLKELIERRSNGLSNQGGGTTSTAVLLSSLQGGGKKKKHNVDTKASKGRKLRYEVNDKLVNFMPPIRDRIKWGPEQIERLFRQLASSSMGVVKHVEAQDMQSDDEGQGDDMAKDAQLAGLRVFG</sequence>
<feature type="chain" id="PRO_0000056632" description="Protein BFR2">
    <location>
        <begin position="1"/>
        <end position="581"/>
    </location>
</feature>
<feature type="region of interest" description="Disordered" evidence="2">
    <location>
        <begin position="19"/>
        <end position="196"/>
    </location>
</feature>
<feature type="region of interest" description="Disordered" evidence="2">
    <location>
        <begin position="486"/>
        <end position="505"/>
    </location>
</feature>
<feature type="compositionally biased region" description="Low complexity" evidence="2">
    <location>
        <begin position="41"/>
        <end position="50"/>
    </location>
</feature>
<feature type="compositionally biased region" description="Acidic residues" evidence="2">
    <location>
        <begin position="51"/>
        <end position="71"/>
    </location>
</feature>
<feature type="compositionally biased region" description="Basic and acidic residues" evidence="2">
    <location>
        <begin position="94"/>
        <end position="103"/>
    </location>
</feature>
<feature type="compositionally biased region" description="Acidic residues" evidence="2">
    <location>
        <begin position="126"/>
        <end position="156"/>
    </location>
</feature>
<feature type="compositionally biased region" description="Acidic residues" evidence="2">
    <location>
        <begin position="171"/>
        <end position="180"/>
    </location>
</feature>
<feature type="compositionally biased region" description="Low complexity" evidence="2">
    <location>
        <begin position="181"/>
        <end position="196"/>
    </location>
</feature>
<keyword id="KW-0539">Nucleus</keyword>
<keyword id="KW-1185">Reference proteome</keyword>
<organism>
    <name type="scientific">Mycosarcoma maydis</name>
    <name type="common">Corn smut fungus</name>
    <name type="synonym">Ustilago maydis</name>
    <dbReference type="NCBI Taxonomy" id="5270"/>
    <lineage>
        <taxon>Eukaryota</taxon>
        <taxon>Fungi</taxon>
        <taxon>Dikarya</taxon>
        <taxon>Basidiomycota</taxon>
        <taxon>Ustilaginomycotina</taxon>
        <taxon>Ustilaginomycetes</taxon>
        <taxon>Ustilaginales</taxon>
        <taxon>Ustilaginaceae</taxon>
        <taxon>Mycosarcoma</taxon>
    </lineage>
</organism>
<evidence type="ECO:0000250" key="1"/>
<evidence type="ECO:0000256" key="2">
    <source>
        <dbReference type="SAM" id="MobiDB-lite"/>
    </source>
</evidence>
<evidence type="ECO:0000305" key="3"/>
<reference key="1">
    <citation type="journal article" date="2006" name="Nature">
        <title>Insights from the genome of the biotrophic fungal plant pathogen Ustilago maydis.</title>
        <authorList>
            <person name="Kaemper J."/>
            <person name="Kahmann R."/>
            <person name="Boelker M."/>
            <person name="Ma L.-J."/>
            <person name="Brefort T."/>
            <person name="Saville B.J."/>
            <person name="Banuett F."/>
            <person name="Kronstad J.W."/>
            <person name="Gold S.E."/>
            <person name="Mueller O."/>
            <person name="Perlin M.H."/>
            <person name="Woesten H.A.B."/>
            <person name="de Vries R."/>
            <person name="Ruiz-Herrera J."/>
            <person name="Reynaga-Pena C.G."/>
            <person name="Snetselaar K."/>
            <person name="McCann M."/>
            <person name="Perez-Martin J."/>
            <person name="Feldbruegge M."/>
            <person name="Basse C.W."/>
            <person name="Steinberg G."/>
            <person name="Ibeas J.I."/>
            <person name="Holloman W."/>
            <person name="Guzman P."/>
            <person name="Farman M.L."/>
            <person name="Stajich J.E."/>
            <person name="Sentandreu R."/>
            <person name="Gonzalez-Prieto J.M."/>
            <person name="Kennell J.C."/>
            <person name="Molina L."/>
            <person name="Schirawski J."/>
            <person name="Mendoza-Mendoza A."/>
            <person name="Greilinger D."/>
            <person name="Muench K."/>
            <person name="Roessel N."/>
            <person name="Scherer M."/>
            <person name="Vranes M."/>
            <person name="Ladendorf O."/>
            <person name="Vincon V."/>
            <person name="Fuchs U."/>
            <person name="Sandrock B."/>
            <person name="Meng S."/>
            <person name="Ho E.C.H."/>
            <person name="Cahill M.J."/>
            <person name="Boyce K.J."/>
            <person name="Klose J."/>
            <person name="Klosterman S.J."/>
            <person name="Deelstra H.J."/>
            <person name="Ortiz-Castellanos L."/>
            <person name="Li W."/>
            <person name="Sanchez-Alonso P."/>
            <person name="Schreier P.H."/>
            <person name="Haeuser-Hahn I."/>
            <person name="Vaupel M."/>
            <person name="Koopmann E."/>
            <person name="Friedrich G."/>
            <person name="Voss H."/>
            <person name="Schlueter T."/>
            <person name="Margolis J."/>
            <person name="Platt D."/>
            <person name="Swimmer C."/>
            <person name="Gnirke A."/>
            <person name="Chen F."/>
            <person name="Vysotskaia V."/>
            <person name="Mannhaupt G."/>
            <person name="Gueldener U."/>
            <person name="Muensterkoetter M."/>
            <person name="Haase D."/>
            <person name="Oesterheld M."/>
            <person name="Mewes H.-W."/>
            <person name="Mauceli E.W."/>
            <person name="DeCaprio D."/>
            <person name="Wade C.M."/>
            <person name="Butler J."/>
            <person name="Young S.K."/>
            <person name="Jaffe D.B."/>
            <person name="Calvo S.E."/>
            <person name="Nusbaum C."/>
            <person name="Galagan J.E."/>
            <person name="Birren B.W."/>
        </authorList>
    </citation>
    <scope>NUCLEOTIDE SEQUENCE [LARGE SCALE GENOMIC DNA]</scope>
    <source>
        <strain>DSM 14603 / FGSC 9021 / UM521</strain>
    </source>
</reference>
<reference key="2">
    <citation type="submission" date="2014-09" db="EMBL/GenBank/DDBJ databases">
        <authorList>
            <person name="Gueldener U."/>
            <person name="Muensterkoetter M."/>
            <person name="Walter M.C."/>
            <person name="Mannhaupt G."/>
            <person name="Kahmann R."/>
        </authorList>
    </citation>
    <scope>GENOME REANNOTATION</scope>
    <source>
        <strain>DSM 14603 / FGSC 9021 / UM521</strain>
    </source>
</reference>
<comment type="subcellular location">
    <subcellularLocation>
        <location evidence="1">Nucleus</location>
        <location evidence="1">Nucleolus</location>
    </subcellularLocation>
</comment>
<comment type="similarity">
    <text evidence="3">Belongs to the AATF family.</text>
</comment>
<accession>Q4P5V5</accession>
<accession>A0A0D1DSU1</accession>
<dbReference type="EMBL" id="CM003152">
    <property type="protein sequence ID" value="KIS67409.1"/>
    <property type="molecule type" value="Genomic_DNA"/>
</dbReference>
<dbReference type="RefSeq" id="XP_011390839.1">
    <property type="nucleotide sequence ID" value="XM_011392537.1"/>
</dbReference>
<dbReference type="SMR" id="Q4P5V5"/>
<dbReference type="FunCoup" id="Q4P5V5">
    <property type="interactions" value="479"/>
</dbReference>
<dbReference type="STRING" id="237631.Q4P5V5"/>
<dbReference type="EnsemblFungi" id="KIS67409">
    <property type="protein sequence ID" value="KIS67409"/>
    <property type="gene ID" value="UMAG_04508"/>
</dbReference>
<dbReference type="GeneID" id="23564671"/>
<dbReference type="KEGG" id="uma:UMAG_04508"/>
<dbReference type="VEuPathDB" id="FungiDB:UMAG_04508"/>
<dbReference type="eggNOG" id="KOG2773">
    <property type="taxonomic scope" value="Eukaryota"/>
</dbReference>
<dbReference type="HOGENOM" id="CLU_018299_2_1_1"/>
<dbReference type="InParanoid" id="Q4P5V5"/>
<dbReference type="OMA" id="INFMAPN"/>
<dbReference type="OrthoDB" id="5783963at2759"/>
<dbReference type="Proteomes" id="UP000000561">
    <property type="component" value="Chromosome 13"/>
</dbReference>
<dbReference type="GO" id="GO:0005730">
    <property type="term" value="C:nucleolus"/>
    <property type="evidence" value="ECO:0000318"/>
    <property type="project" value="GO_Central"/>
</dbReference>
<dbReference type="GO" id="GO:0000462">
    <property type="term" value="P:maturation of SSU-rRNA from tricistronic rRNA transcript (SSU-rRNA, 5.8S rRNA, LSU-rRNA)"/>
    <property type="evidence" value="ECO:0000318"/>
    <property type="project" value="GO_Central"/>
</dbReference>
<dbReference type="InterPro" id="IPR025160">
    <property type="entry name" value="AATF"/>
</dbReference>
<dbReference type="InterPro" id="IPR039223">
    <property type="entry name" value="AATF/Bfr2"/>
</dbReference>
<dbReference type="InterPro" id="IPR012617">
    <property type="entry name" value="AATF_C"/>
</dbReference>
<dbReference type="PANTHER" id="PTHR15565">
    <property type="entry name" value="AATF PROTEIN APOPTOSIS ANTAGONIZING TRANSCRIPTION FACTOR"/>
    <property type="match status" value="1"/>
</dbReference>
<dbReference type="PANTHER" id="PTHR15565:SF0">
    <property type="entry name" value="PROTEIN AATF"/>
    <property type="match status" value="1"/>
</dbReference>
<dbReference type="Pfam" id="PF13339">
    <property type="entry name" value="AATF-Che1"/>
    <property type="match status" value="1"/>
</dbReference>
<dbReference type="Pfam" id="PF08164">
    <property type="entry name" value="TRAUB"/>
    <property type="match status" value="1"/>
</dbReference>
<gene>
    <name type="primary">BFR2</name>
    <name type="ORF">UMAG_04508</name>
</gene>
<name>BFR2_MYCMD</name>
<proteinExistence type="inferred from homology"/>